<keyword id="KW-0067">ATP-binding</keyword>
<keyword id="KW-0963">Cytoplasm</keyword>
<keyword id="KW-0418">Kinase</keyword>
<keyword id="KW-0547">Nucleotide-binding</keyword>
<keyword id="KW-0539">Nucleus</keyword>
<keyword id="KW-1185">Reference proteome</keyword>
<keyword id="KW-0723">Serine/threonine-protein kinase</keyword>
<keyword id="KW-0808">Transferase</keyword>
<accession>Q9SYB9</accession>
<comment type="function">
    <text evidence="3">Regulates planar ovule integument development by suppressing aberrantly oriented growth. Maintains planar growth of integuments by repressing the developmental regulator and transcription factor KAN4 which is involved in the control of early integument growth and polarity. Restricts growth in stamen filaments, petals, and cotyledons.</text>
</comment>
<comment type="catalytic activity">
    <reaction evidence="3">
        <text>L-seryl-[protein] + ATP = O-phospho-L-seryl-[protein] + ADP + H(+)</text>
        <dbReference type="Rhea" id="RHEA:17989"/>
        <dbReference type="Rhea" id="RHEA-COMP:9863"/>
        <dbReference type="Rhea" id="RHEA-COMP:11604"/>
        <dbReference type="ChEBI" id="CHEBI:15378"/>
        <dbReference type="ChEBI" id="CHEBI:29999"/>
        <dbReference type="ChEBI" id="CHEBI:30616"/>
        <dbReference type="ChEBI" id="CHEBI:83421"/>
        <dbReference type="ChEBI" id="CHEBI:456216"/>
        <dbReference type="EC" id="2.7.11.1"/>
    </reaction>
</comment>
<comment type="catalytic activity">
    <reaction evidence="3">
        <text>L-threonyl-[protein] + ATP = O-phospho-L-threonyl-[protein] + ADP + H(+)</text>
        <dbReference type="Rhea" id="RHEA:46608"/>
        <dbReference type="Rhea" id="RHEA-COMP:11060"/>
        <dbReference type="Rhea" id="RHEA-COMP:11605"/>
        <dbReference type="ChEBI" id="CHEBI:15378"/>
        <dbReference type="ChEBI" id="CHEBI:30013"/>
        <dbReference type="ChEBI" id="CHEBI:30616"/>
        <dbReference type="ChEBI" id="CHEBI:61977"/>
        <dbReference type="ChEBI" id="CHEBI:456216"/>
        <dbReference type="EC" id="2.7.11.1"/>
    </reaction>
</comment>
<comment type="subcellular location">
    <subcellularLocation>
        <location evidence="3">Cytoplasm</location>
    </subcellularLocation>
    <subcellularLocation>
        <location evidence="3">Nucleus</location>
    </subcellularLocation>
</comment>
<comment type="tissue specificity">
    <text evidence="3">Expressed in the epidermis and cortex of the transition zone of the root apex and developing flowers. Expressed in rosette leaves, stems and siliques.</text>
</comment>
<comment type="disruption phenotype">
    <text evidence="3">Ectopic growth in filaments and petals, distortion of integument planar growth and aberrant embryogenesis and partial lethality in ucn-1 embryos. The double mutants ucn-2 and ucnl-5 are embryonic lethal.</text>
</comment>
<comment type="similarity">
    <text evidence="6">Belongs to the protein kinase superfamily. AGC Ser/Thr protein kinase family.</text>
</comment>
<gene>
    <name evidence="5" type="primary">UNC</name>
    <name evidence="4" type="synonym">AGC2-3</name>
    <name evidence="7 10" type="ordered locus">At1g51170</name>
    <name evidence="8" type="ORF">F11M15.3</name>
    <name evidence="9" type="ORF">F23H24.1</name>
</gene>
<dbReference type="EC" id="2.7.11.1" evidence="3"/>
<dbReference type="EMBL" id="AC006085">
    <property type="protein sequence ID" value="AAD30630.1"/>
    <property type="molecule type" value="Genomic_DNA"/>
</dbReference>
<dbReference type="EMBL" id="AC079828">
    <property type="protein sequence ID" value="AAG50535.1"/>
    <property type="molecule type" value="Genomic_DNA"/>
</dbReference>
<dbReference type="EMBL" id="CP002684">
    <property type="protein sequence ID" value="AEE32630.1"/>
    <property type="molecule type" value="Genomic_DNA"/>
</dbReference>
<dbReference type="EMBL" id="BT029004">
    <property type="protein sequence ID" value="ABI93913.1"/>
    <property type="molecule type" value="mRNA"/>
</dbReference>
<dbReference type="EMBL" id="AK229385">
    <property type="protein sequence ID" value="BAF01247.1"/>
    <property type="molecule type" value="mRNA"/>
</dbReference>
<dbReference type="PIR" id="C96549">
    <property type="entry name" value="C96549"/>
</dbReference>
<dbReference type="RefSeq" id="NP_564584.1">
    <property type="nucleotide sequence ID" value="NM_103996.4"/>
</dbReference>
<dbReference type="SMR" id="Q9SYB9"/>
<dbReference type="BioGRID" id="26765">
    <property type="interactions" value="2"/>
</dbReference>
<dbReference type="FunCoup" id="Q9SYB9">
    <property type="interactions" value="46"/>
</dbReference>
<dbReference type="IntAct" id="Q9SYB9">
    <property type="interactions" value="2"/>
</dbReference>
<dbReference type="MINT" id="Q9SYB9"/>
<dbReference type="STRING" id="3702.Q9SYB9"/>
<dbReference type="iPTMnet" id="Q9SYB9"/>
<dbReference type="PaxDb" id="3702-AT1G51170.1"/>
<dbReference type="EnsemblPlants" id="AT1G51170.1">
    <property type="protein sequence ID" value="AT1G51170.1"/>
    <property type="gene ID" value="AT1G51170"/>
</dbReference>
<dbReference type="GeneID" id="841540"/>
<dbReference type="Gramene" id="AT1G51170.1">
    <property type="protein sequence ID" value="AT1G51170.1"/>
    <property type="gene ID" value="AT1G51170"/>
</dbReference>
<dbReference type="KEGG" id="ath:AT1G51170"/>
<dbReference type="Araport" id="AT1G51170"/>
<dbReference type="TAIR" id="AT1G51170">
    <property type="gene designation" value="UCN"/>
</dbReference>
<dbReference type="eggNOG" id="KOG0610">
    <property type="taxonomic scope" value="Eukaryota"/>
</dbReference>
<dbReference type="HOGENOM" id="CLU_000288_63_30_1"/>
<dbReference type="InParanoid" id="Q9SYB9"/>
<dbReference type="OMA" id="LPLPHEC"/>
<dbReference type="PhylomeDB" id="Q9SYB9"/>
<dbReference type="PRO" id="PR:Q9SYB9"/>
<dbReference type="Proteomes" id="UP000006548">
    <property type="component" value="Chromosome 1"/>
</dbReference>
<dbReference type="ExpressionAtlas" id="Q9SYB9">
    <property type="expression patterns" value="baseline and differential"/>
</dbReference>
<dbReference type="GO" id="GO:0005737">
    <property type="term" value="C:cytoplasm"/>
    <property type="evidence" value="ECO:0000314"/>
    <property type="project" value="TAIR"/>
</dbReference>
<dbReference type="GO" id="GO:0005634">
    <property type="term" value="C:nucleus"/>
    <property type="evidence" value="ECO:0000314"/>
    <property type="project" value="TAIR"/>
</dbReference>
<dbReference type="GO" id="GO:0005886">
    <property type="term" value="C:plasma membrane"/>
    <property type="evidence" value="ECO:0000314"/>
    <property type="project" value="TAIR"/>
</dbReference>
<dbReference type="GO" id="GO:0005524">
    <property type="term" value="F:ATP binding"/>
    <property type="evidence" value="ECO:0007669"/>
    <property type="project" value="UniProtKB-KW"/>
</dbReference>
<dbReference type="GO" id="GO:0016301">
    <property type="term" value="F:kinase activity"/>
    <property type="evidence" value="ECO:0000250"/>
    <property type="project" value="TAIR"/>
</dbReference>
<dbReference type="GO" id="GO:0004672">
    <property type="term" value="F:protein kinase activity"/>
    <property type="evidence" value="ECO:0000314"/>
    <property type="project" value="TAIR"/>
</dbReference>
<dbReference type="GO" id="GO:0106310">
    <property type="term" value="F:protein serine kinase activity"/>
    <property type="evidence" value="ECO:0007669"/>
    <property type="project" value="RHEA"/>
</dbReference>
<dbReference type="GO" id="GO:0004674">
    <property type="term" value="F:protein serine/threonine kinase activity"/>
    <property type="evidence" value="ECO:0007669"/>
    <property type="project" value="UniProtKB-KW"/>
</dbReference>
<dbReference type="GO" id="GO:0080060">
    <property type="term" value="P:integument development"/>
    <property type="evidence" value="ECO:0000315"/>
    <property type="project" value="TAIR"/>
</dbReference>
<dbReference type="GO" id="GO:0051782">
    <property type="term" value="P:negative regulation of cell division"/>
    <property type="evidence" value="ECO:0000315"/>
    <property type="project" value="TAIR"/>
</dbReference>
<dbReference type="GO" id="GO:0036290">
    <property type="term" value="P:protein trans-autophosphorylation"/>
    <property type="evidence" value="ECO:0000314"/>
    <property type="project" value="TAIR"/>
</dbReference>
<dbReference type="CDD" id="cd05574">
    <property type="entry name" value="STKc_phototropin_like"/>
    <property type="match status" value="1"/>
</dbReference>
<dbReference type="FunFam" id="1.10.510.10:FF:000294">
    <property type="entry name" value="Serine/threonine-protein kinase OXI1"/>
    <property type="match status" value="1"/>
</dbReference>
<dbReference type="FunFam" id="1.10.510.10:FF:000312">
    <property type="entry name" value="Serine/threonine-protein kinase OXI1"/>
    <property type="match status" value="1"/>
</dbReference>
<dbReference type="FunFam" id="3.30.200.20:FF:000807">
    <property type="entry name" value="Serine/threonine-protein kinase UCNL"/>
    <property type="match status" value="1"/>
</dbReference>
<dbReference type="Gene3D" id="3.30.200.20">
    <property type="entry name" value="Phosphorylase Kinase, domain 1"/>
    <property type="match status" value="1"/>
</dbReference>
<dbReference type="Gene3D" id="1.10.510.10">
    <property type="entry name" value="Transferase(Phosphotransferase) domain 1"/>
    <property type="match status" value="2"/>
</dbReference>
<dbReference type="InterPro" id="IPR011009">
    <property type="entry name" value="Kinase-like_dom_sf"/>
</dbReference>
<dbReference type="InterPro" id="IPR000719">
    <property type="entry name" value="Prot_kinase_dom"/>
</dbReference>
<dbReference type="InterPro" id="IPR017441">
    <property type="entry name" value="Protein_kinase_ATP_BS"/>
</dbReference>
<dbReference type="InterPro" id="IPR008271">
    <property type="entry name" value="Ser/Thr_kinase_AS"/>
</dbReference>
<dbReference type="PANTHER" id="PTHR45637">
    <property type="entry name" value="FLIPPASE KINASE 1-RELATED"/>
    <property type="match status" value="1"/>
</dbReference>
<dbReference type="Pfam" id="PF00069">
    <property type="entry name" value="Pkinase"/>
    <property type="match status" value="2"/>
</dbReference>
<dbReference type="SMART" id="SM00220">
    <property type="entry name" value="S_TKc"/>
    <property type="match status" value="1"/>
</dbReference>
<dbReference type="SUPFAM" id="SSF56112">
    <property type="entry name" value="Protein kinase-like (PK-like)"/>
    <property type="match status" value="1"/>
</dbReference>
<dbReference type="PROSITE" id="PS00107">
    <property type="entry name" value="PROTEIN_KINASE_ATP"/>
    <property type="match status" value="1"/>
</dbReference>
<dbReference type="PROSITE" id="PS50011">
    <property type="entry name" value="PROTEIN_KINASE_DOM"/>
    <property type="match status" value="1"/>
</dbReference>
<dbReference type="PROSITE" id="PS00108">
    <property type="entry name" value="PROTEIN_KINASE_ST"/>
    <property type="match status" value="1"/>
</dbReference>
<proteinExistence type="evidence at protein level"/>
<protein>
    <recommendedName>
        <fullName evidence="6">Serine/threonine-protein kinase UCN</fullName>
        <ecNumber evidence="3">2.7.11.1</ecNumber>
    </recommendedName>
    <alternativeName>
        <fullName evidence="4">AGC serine/threonine-protein kinase subfamily 2 member 3</fullName>
    </alternativeName>
    <alternativeName>
        <fullName evidence="5">Protein UNICORN</fullName>
    </alternativeName>
</protein>
<sequence length="404" mass="45665">METRPSSSSSLSPATNLNLDRLKVLKLLGKGATGTVFLVHDSVSDSSVSSPFALKLVDKSSASSLRRARWEIQILRRLSDDTNPNPFLPKLLASSESSEFIAWALPYCSGGDLNVLRQRQNDGVFSSSVIKFYLAEIVCALDHLHTMGIAYRDLKPENILLQESGHVTLTDFDLSCSLNKPTRPEFYHLSDPEPDPNPESNLSHNKKSLRIFRQKKKKTKSARVNPITRRRLSFSGGERSNSFVGTDEYISPEVIRGDGHDFAVDWWALGVLTYEMMYGETPFKGRNKKETFRNVLVKEPEFAGKPSDLTDLIRRLLVKDPTKRFGFWRGAAEIKEHAFFKGVRWELLTEVLRPPFIPLRDDGDLTGKVTEESGFGIKEYFEKLKTPPLPLPHECSENNPFVDF</sequence>
<name>UNC_ARATH</name>
<feature type="chain" id="PRO_0000430952" description="Serine/threonine-protein kinase UCN">
    <location>
        <begin position="1"/>
        <end position="404"/>
    </location>
</feature>
<feature type="domain" description="Protein kinase" evidence="1">
    <location>
        <begin position="22"/>
        <end position="340"/>
    </location>
</feature>
<feature type="domain" description="AGC-kinase C-terminal" evidence="6">
    <location>
        <begin position="341"/>
        <end position="404"/>
    </location>
</feature>
<feature type="region of interest" description="Disordered" evidence="2">
    <location>
        <begin position="185"/>
        <end position="207"/>
    </location>
</feature>
<feature type="active site" description="Proton acceptor" evidence="1">
    <location>
        <position position="153"/>
    </location>
</feature>
<feature type="binding site" evidence="1">
    <location>
        <begin position="28"/>
        <end position="36"/>
    </location>
    <ligand>
        <name>ATP</name>
        <dbReference type="ChEBI" id="CHEBI:30616"/>
    </ligand>
</feature>
<feature type="binding site" evidence="1">
    <location>
        <position position="55"/>
    </location>
    <ligand>
        <name>ATP</name>
        <dbReference type="ChEBI" id="CHEBI:30616"/>
    </ligand>
</feature>
<feature type="mutagenesis site" description="Loss of activity." evidence="3">
    <original>K</original>
    <variation>D</variation>
    <location>
        <position position="55"/>
    </location>
</feature>
<feature type="mutagenesis site" description="In ucn-1; loss of activity." evidence="3">
    <original>G</original>
    <variation>S</variation>
    <location>
        <position position="165"/>
    </location>
</feature>
<reference key="1">
    <citation type="journal article" date="2000" name="Nature">
        <title>Sequence and analysis of chromosome 1 of the plant Arabidopsis thaliana.</title>
        <authorList>
            <person name="Theologis A."/>
            <person name="Ecker J.R."/>
            <person name="Palm C.J."/>
            <person name="Federspiel N.A."/>
            <person name="Kaul S."/>
            <person name="White O."/>
            <person name="Alonso J."/>
            <person name="Altafi H."/>
            <person name="Araujo R."/>
            <person name="Bowman C.L."/>
            <person name="Brooks S.Y."/>
            <person name="Buehler E."/>
            <person name="Chan A."/>
            <person name="Chao Q."/>
            <person name="Chen H."/>
            <person name="Cheuk R.F."/>
            <person name="Chin C.W."/>
            <person name="Chung M.K."/>
            <person name="Conn L."/>
            <person name="Conway A.B."/>
            <person name="Conway A.R."/>
            <person name="Creasy T.H."/>
            <person name="Dewar K."/>
            <person name="Dunn P."/>
            <person name="Etgu P."/>
            <person name="Feldblyum T.V."/>
            <person name="Feng J.-D."/>
            <person name="Fong B."/>
            <person name="Fujii C.Y."/>
            <person name="Gill J.E."/>
            <person name="Goldsmith A.D."/>
            <person name="Haas B."/>
            <person name="Hansen N.F."/>
            <person name="Hughes B."/>
            <person name="Huizar L."/>
            <person name="Hunter J.L."/>
            <person name="Jenkins J."/>
            <person name="Johnson-Hopson C."/>
            <person name="Khan S."/>
            <person name="Khaykin E."/>
            <person name="Kim C.J."/>
            <person name="Koo H.L."/>
            <person name="Kremenetskaia I."/>
            <person name="Kurtz D.B."/>
            <person name="Kwan A."/>
            <person name="Lam B."/>
            <person name="Langin-Hooper S."/>
            <person name="Lee A."/>
            <person name="Lee J.M."/>
            <person name="Lenz C.A."/>
            <person name="Li J.H."/>
            <person name="Li Y.-P."/>
            <person name="Lin X."/>
            <person name="Liu S.X."/>
            <person name="Liu Z.A."/>
            <person name="Luros J.S."/>
            <person name="Maiti R."/>
            <person name="Marziali A."/>
            <person name="Militscher J."/>
            <person name="Miranda M."/>
            <person name="Nguyen M."/>
            <person name="Nierman W.C."/>
            <person name="Osborne B.I."/>
            <person name="Pai G."/>
            <person name="Peterson J."/>
            <person name="Pham P.K."/>
            <person name="Rizzo M."/>
            <person name="Rooney T."/>
            <person name="Rowley D."/>
            <person name="Sakano H."/>
            <person name="Salzberg S.L."/>
            <person name="Schwartz J.R."/>
            <person name="Shinn P."/>
            <person name="Southwick A.M."/>
            <person name="Sun H."/>
            <person name="Tallon L.J."/>
            <person name="Tambunga G."/>
            <person name="Toriumi M.J."/>
            <person name="Town C.D."/>
            <person name="Utterback T."/>
            <person name="Van Aken S."/>
            <person name="Vaysberg M."/>
            <person name="Vysotskaia V.S."/>
            <person name="Walker M."/>
            <person name="Wu D."/>
            <person name="Yu G."/>
            <person name="Fraser C.M."/>
            <person name="Venter J.C."/>
            <person name="Davis R.W."/>
        </authorList>
    </citation>
    <scope>NUCLEOTIDE SEQUENCE [LARGE SCALE GENOMIC DNA]</scope>
    <source>
        <strain>cv. Columbia</strain>
    </source>
</reference>
<reference key="2">
    <citation type="journal article" date="2017" name="Plant J.">
        <title>Araport11: a complete reannotation of the Arabidopsis thaliana reference genome.</title>
        <authorList>
            <person name="Cheng C.Y."/>
            <person name="Krishnakumar V."/>
            <person name="Chan A.P."/>
            <person name="Thibaud-Nissen F."/>
            <person name="Schobel S."/>
            <person name="Town C.D."/>
        </authorList>
    </citation>
    <scope>GENOME REANNOTATION</scope>
    <source>
        <strain>cv. Columbia</strain>
    </source>
</reference>
<reference key="3">
    <citation type="submission" date="2006-07" db="EMBL/GenBank/DDBJ databases">
        <title>Large-scale analysis of RIKEN Arabidopsis full-length (RAFL) cDNAs.</title>
        <authorList>
            <person name="Totoki Y."/>
            <person name="Seki M."/>
            <person name="Ishida J."/>
            <person name="Nakajima M."/>
            <person name="Enju A."/>
            <person name="Kamiya A."/>
            <person name="Narusaka M."/>
            <person name="Shin-i T."/>
            <person name="Nakagawa M."/>
            <person name="Sakamoto N."/>
            <person name="Oishi K."/>
            <person name="Kohara Y."/>
            <person name="Kobayashi M."/>
            <person name="Toyoda A."/>
            <person name="Sakaki Y."/>
            <person name="Sakurai T."/>
            <person name="Iida K."/>
            <person name="Akiyama K."/>
            <person name="Satou M."/>
            <person name="Toyoda T."/>
            <person name="Konagaya A."/>
            <person name="Carninci P."/>
            <person name="Kawai J."/>
            <person name="Hayashizaki Y."/>
            <person name="Shinozaki K."/>
        </authorList>
    </citation>
    <scope>NUCLEOTIDE SEQUENCE [LARGE SCALE MRNA]</scope>
    <source>
        <strain>cv. Columbia</strain>
    </source>
</reference>
<reference key="4">
    <citation type="submission" date="2006-09" db="EMBL/GenBank/DDBJ databases">
        <title>Arabidopsis ORF clones.</title>
        <authorList>
            <person name="Bautista V.R."/>
            <person name="Kim C.J."/>
            <person name="Chen H."/>
            <person name="Quinitio C."/>
            <person name="Ecker J.R."/>
        </authorList>
    </citation>
    <scope>NUCLEOTIDE SEQUENCE [LARGE SCALE MRNA]</scope>
    <source>
        <strain>cv. Columbia</strain>
    </source>
</reference>
<reference key="5">
    <citation type="journal article" date="2003" name="Trends Plant Sci.">
        <title>Growth signalling pathways in Arabidopsis and the AGC protein kinases.</title>
        <authorList>
            <person name="Boegre L."/>
            <person name="Okresz L."/>
            <person name="Henriques R."/>
            <person name="Anthony R.G."/>
        </authorList>
    </citation>
    <scope>GENE FAMILY</scope>
</reference>
<reference key="6">
    <citation type="journal article" date="2012" name="Proc. Natl. Acad. Sci. U.S.A.">
        <title>Regulation of planar growth by the Arabidopsis AGC protein kinase UNICORN.</title>
        <authorList>
            <person name="Enugutti B."/>
            <person name="Kirchhelle C."/>
            <person name="Oelschner M."/>
            <person name="Torres Ruiz R.A."/>
            <person name="Schliebner I."/>
            <person name="Leister D."/>
            <person name="Schneitz K."/>
        </authorList>
    </citation>
    <scope>FUNCTION</scope>
    <scope>SUBCELLULAR LOCATION</scope>
    <scope>TISSUE SPECIFICITY</scope>
    <scope>MUTAGENESIS OF LYS-55 AND GLY-165</scope>
    <scope>DISRUPTION PHENOTYPE</scope>
    <scope>CATALYTIC ACTIVITY</scope>
</reference>
<organism>
    <name type="scientific">Arabidopsis thaliana</name>
    <name type="common">Mouse-ear cress</name>
    <dbReference type="NCBI Taxonomy" id="3702"/>
    <lineage>
        <taxon>Eukaryota</taxon>
        <taxon>Viridiplantae</taxon>
        <taxon>Streptophyta</taxon>
        <taxon>Embryophyta</taxon>
        <taxon>Tracheophyta</taxon>
        <taxon>Spermatophyta</taxon>
        <taxon>Magnoliopsida</taxon>
        <taxon>eudicotyledons</taxon>
        <taxon>Gunneridae</taxon>
        <taxon>Pentapetalae</taxon>
        <taxon>rosids</taxon>
        <taxon>malvids</taxon>
        <taxon>Brassicales</taxon>
        <taxon>Brassicaceae</taxon>
        <taxon>Camelineae</taxon>
        <taxon>Arabidopsis</taxon>
    </lineage>
</organism>
<evidence type="ECO:0000255" key="1">
    <source>
        <dbReference type="PROSITE-ProRule" id="PRU00159"/>
    </source>
</evidence>
<evidence type="ECO:0000256" key="2">
    <source>
        <dbReference type="SAM" id="MobiDB-lite"/>
    </source>
</evidence>
<evidence type="ECO:0000269" key="3">
    <source>
    </source>
</evidence>
<evidence type="ECO:0000303" key="4">
    <source>
    </source>
</evidence>
<evidence type="ECO:0000303" key="5">
    <source>
    </source>
</evidence>
<evidence type="ECO:0000305" key="6"/>
<evidence type="ECO:0000312" key="7">
    <source>
        <dbReference type="Araport" id="AT1G51170"/>
    </source>
</evidence>
<evidence type="ECO:0000312" key="8">
    <source>
        <dbReference type="EMBL" id="AAD30630.1"/>
    </source>
</evidence>
<evidence type="ECO:0000312" key="9">
    <source>
        <dbReference type="EMBL" id="AAG50535.1"/>
    </source>
</evidence>
<evidence type="ECO:0000312" key="10">
    <source>
        <dbReference type="EMBL" id="AEE32630.1"/>
    </source>
</evidence>